<accession>Q2TBX6</accession>
<sequence>MLSSVAAYSGAGRDLAMEPHSSVGPLQLRFSPYAFNGGTVLAIAGEDFSIVASDTRLSEGFSIHTRDSPKCYKLTDKTVIGCSGFHGDCLTLTKIIEARLKMYKHSNNKAMTTGAIAAMLSTILYSRRFFPYYVYNIIGGLDEEGKGAVYSFDPVGSYQRDSFKAGGSASAMLQPLLDNQVGFKNMQNVEHVPLSLDRAMRLVKDVFISAAERDVYTGDALKVCIVTKEGIRGETVPLRKD</sequence>
<gene>
    <name type="primary">PSMB1</name>
</gene>
<feature type="propeptide" id="PRO_0000259622" evidence="1">
    <location>
        <begin position="1"/>
        <end position="28"/>
    </location>
</feature>
<feature type="chain" id="PRO_0000239853" description="Proteasome subunit beta type-1">
    <location>
        <begin position="29"/>
        <end position="241"/>
    </location>
</feature>
<feature type="modified residue" description="N-acetylmethionine" evidence="3">
    <location>
        <position position="1"/>
    </location>
</feature>
<feature type="modified residue" description="Phosphoserine" evidence="3">
    <location>
        <position position="62"/>
    </location>
</feature>
<feature type="modified residue" description="Phosphoserine" evidence="3">
    <location>
        <position position="68"/>
    </location>
</feature>
<feature type="modified residue" description="Phosphotyrosine" evidence="2">
    <location>
        <position position="150"/>
    </location>
</feature>
<feature type="modified residue" description="Phosphoserine" evidence="3">
    <location>
        <position position="162"/>
    </location>
</feature>
<feature type="modified residue" description="N6-acetyllysine" evidence="3">
    <location>
        <position position="204"/>
    </location>
</feature>
<feature type="glycosylation site" description="O-linked (GlcNAc) serine" evidence="1">
    <location>
        <position position="58"/>
    </location>
</feature>
<feature type="glycosylation site" description="O-linked (GlcNAc) serine" evidence="1">
    <location>
        <position position="209"/>
    </location>
</feature>
<feature type="strand" evidence="6">
    <location>
        <begin position="39"/>
        <end position="44"/>
    </location>
</feature>
<feature type="strand" evidence="6">
    <location>
        <begin position="49"/>
        <end position="54"/>
    </location>
</feature>
<feature type="strand" evidence="6">
    <location>
        <begin position="57"/>
        <end position="59"/>
    </location>
</feature>
<feature type="strand" evidence="6">
    <location>
        <begin position="62"/>
        <end position="66"/>
    </location>
</feature>
<feature type="strand" evidence="6">
    <location>
        <begin position="71"/>
        <end position="75"/>
    </location>
</feature>
<feature type="strand" evidence="6">
    <location>
        <begin position="78"/>
        <end position="84"/>
    </location>
</feature>
<feature type="helix" evidence="6">
    <location>
        <begin position="86"/>
        <end position="107"/>
    </location>
</feature>
<feature type="helix" evidence="6">
    <location>
        <begin position="113"/>
        <end position="125"/>
    </location>
</feature>
<feature type="turn" evidence="6">
    <location>
        <begin position="126"/>
        <end position="129"/>
    </location>
</feature>
<feature type="strand" evidence="6">
    <location>
        <begin position="134"/>
        <end position="141"/>
    </location>
</feature>
<feature type="strand" evidence="6">
    <location>
        <begin position="147"/>
        <end position="152"/>
    </location>
</feature>
<feature type="strand" evidence="6">
    <location>
        <begin position="158"/>
        <end position="167"/>
    </location>
</feature>
<feature type="helix" evidence="6">
    <location>
        <begin position="170"/>
        <end position="180"/>
    </location>
</feature>
<feature type="helix" evidence="6">
    <location>
        <begin position="196"/>
        <end position="213"/>
    </location>
</feature>
<feature type="strand" evidence="6">
    <location>
        <begin position="219"/>
        <end position="227"/>
    </location>
</feature>
<feature type="strand" evidence="6">
    <location>
        <begin position="230"/>
        <end position="237"/>
    </location>
</feature>
<comment type="function">
    <text evidence="3">Non-catalytic component of the 20S core proteasome complex involved in the proteolytic degradation of most intracellular proteins. This complex plays numerous essential roles within the cell by associating with different regulatory particles. Associated with two 19S regulatory particles, forms the 26S proteasome and thus participates in the ATP-dependent degradation of ubiquitinated proteins. The 26S proteasome plays a key role in the maintenance of protein homeostasis by removing misfolded or damaged proteins that could impair cellular functions, and by removing proteins whose functions are no longer required. Associated with the PA200 or PA28, the 20S proteasome mediates ubiquitin-independent protein degradation. This type of proteolysis is required in several pathways including spermatogenesis (20S-PA200 complex) or generation of a subset of MHC class I-presented antigenic peptides (20S-PA28 complex).</text>
</comment>
<comment type="subunit">
    <text evidence="2 3 5">The 26S proteasome consists of a 20S proteasome core and two 19S regulatory subunits. The 20S proteasome core is a barrel-shaped complex made of 28 subunits that are arranged in four stacked rings. The two outer rings are each formed by seven alpha subunits, and the two inner rings are formed by seven beta subunits. The proteolytic activity is exerted by three beta-subunits PSMB5, PSMB6 and PSMB7 (PubMed:12015144). Interacts with SERPINB2. Interacts with RFPL4A (By similarity).</text>
</comment>
<comment type="subcellular location">
    <subcellularLocation>
        <location evidence="3">Cytoplasm</location>
    </subcellularLocation>
    <subcellularLocation>
        <location evidence="3">Nucleus</location>
    </subcellularLocation>
    <text evidence="3">Translocated from the cytoplasm into the nucleus following interaction with AKIRIN2, which bridges the proteasome with the nuclear import receptor IPO9.</text>
</comment>
<comment type="similarity">
    <text evidence="4">Belongs to the peptidase T1B family.</text>
</comment>
<reference key="1">
    <citation type="submission" date="2005-11" db="EMBL/GenBank/DDBJ databases">
        <authorList>
            <consortium name="NIH - Mammalian Gene Collection (MGC) project"/>
        </authorList>
    </citation>
    <scope>NUCLEOTIDE SEQUENCE [LARGE SCALE MRNA]</scope>
    <source>
        <strain>Crossbred X Angus</strain>
        <tissue>Liver</tissue>
    </source>
</reference>
<reference key="2">
    <citation type="journal article" date="2002" name="Structure">
        <title>The structure of the mammalian 20S proteasome at 2.75 A resolution.</title>
        <authorList>
            <person name="Unno M."/>
            <person name="Mizushima T."/>
            <person name="Morimoto Y."/>
            <person name="Tomisugi Y."/>
            <person name="Tanaka K."/>
            <person name="Yasuoka N."/>
            <person name="Tsukihara T."/>
        </authorList>
    </citation>
    <scope>X-RAY CRYSTALLOGRAPHY (2.75 ANGSTROMS) OF 29-241 OF COMPLEX WITH 20S PROTEASOME</scope>
</reference>
<keyword id="KW-0002">3D-structure</keyword>
<keyword id="KW-0007">Acetylation</keyword>
<keyword id="KW-0963">Cytoplasm</keyword>
<keyword id="KW-0325">Glycoprotein</keyword>
<keyword id="KW-0539">Nucleus</keyword>
<keyword id="KW-0597">Phosphoprotein</keyword>
<keyword id="KW-0647">Proteasome</keyword>
<keyword id="KW-1185">Reference proteome</keyword>
<name>PSB1_BOVIN</name>
<protein>
    <recommendedName>
        <fullName>Proteasome subunit beta type-1</fullName>
    </recommendedName>
</protein>
<organism>
    <name type="scientific">Bos taurus</name>
    <name type="common">Bovine</name>
    <dbReference type="NCBI Taxonomy" id="9913"/>
    <lineage>
        <taxon>Eukaryota</taxon>
        <taxon>Metazoa</taxon>
        <taxon>Chordata</taxon>
        <taxon>Craniata</taxon>
        <taxon>Vertebrata</taxon>
        <taxon>Euteleostomi</taxon>
        <taxon>Mammalia</taxon>
        <taxon>Eutheria</taxon>
        <taxon>Laurasiatheria</taxon>
        <taxon>Artiodactyla</taxon>
        <taxon>Ruminantia</taxon>
        <taxon>Pecora</taxon>
        <taxon>Bovidae</taxon>
        <taxon>Bovinae</taxon>
        <taxon>Bos</taxon>
    </lineage>
</organism>
<proteinExistence type="evidence at protein level"/>
<evidence type="ECO:0000250" key="1"/>
<evidence type="ECO:0000250" key="2">
    <source>
        <dbReference type="UniProtKB" id="O09061"/>
    </source>
</evidence>
<evidence type="ECO:0000250" key="3">
    <source>
        <dbReference type="UniProtKB" id="P20618"/>
    </source>
</evidence>
<evidence type="ECO:0000255" key="4">
    <source>
        <dbReference type="PROSITE-ProRule" id="PRU00809"/>
    </source>
</evidence>
<evidence type="ECO:0000269" key="5">
    <source>
    </source>
</evidence>
<evidence type="ECO:0007829" key="6">
    <source>
        <dbReference type="PDB" id="8FZ5"/>
    </source>
</evidence>
<dbReference type="EMBL" id="BC109494">
    <property type="protein sequence ID" value="AAI09495.1"/>
    <property type="molecule type" value="mRNA"/>
</dbReference>
<dbReference type="RefSeq" id="NP_001033628.1">
    <property type="nucleotide sequence ID" value="NM_001038539.2"/>
</dbReference>
<dbReference type="PDB" id="1IRU">
    <property type="method" value="X-ray"/>
    <property type="resolution" value="2.75 A"/>
    <property type="chains" value="1/M=29-241"/>
</dbReference>
<dbReference type="PDB" id="7DR6">
    <property type="method" value="EM"/>
    <property type="resolution" value="4.10 A"/>
    <property type="chains" value="J/U=1-241"/>
</dbReference>
<dbReference type="PDB" id="7DR7">
    <property type="method" value="EM"/>
    <property type="resolution" value="3.30 A"/>
    <property type="chains" value="J/U=1-241"/>
</dbReference>
<dbReference type="PDB" id="7DRW">
    <property type="method" value="EM"/>
    <property type="resolution" value="4.20 A"/>
    <property type="chains" value="U/m=1-241"/>
</dbReference>
<dbReference type="PDB" id="8AZK">
    <property type="method" value="EM"/>
    <property type="resolution" value="3.10 A"/>
    <property type="chains" value="1/M=29-241"/>
</dbReference>
<dbReference type="PDB" id="8FZ5">
    <property type="method" value="EM"/>
    <property type="resolution" value="2.23 A"/>
    <property type="chains" value="M/a=1-241"/>
</dbReference>
<dbReference type="PDB" id="8FZ6">
    <property type="method" value="EM"/>
    <property type="resolution" value="2.54 A"/>
    <property type="chains" value="M/a=1-241"/>
</dbReference>
<dbReference type="PDBsum" id="1IRU"/>
<dbReference type="PDBsum" id="7DR6"/>
<dbReference type="PDBsum" id="7DR7"/>
<dbReference type="PDBsum" id="7DRW"/>
<dbReference type="PDBsum" id="8AZK"/>
<dbReference type="PDBsum" id="8FZ5"/>
<dbReference type="PDBsum" id="8FZ6"/>
<dbReference type="EMDB" id="EMD-15767"/>
<dbReference type="EMDB" id="EMD-29603"/>
<dbReference type="EMDB" id="EMD-29604"/>
<dbReference type="EMDB" id="EMD-30824"/>
<dbReference type="EMDB" id="EMD-30825"/>
<dbReference type="EMDB" id="EMD-30828"/>
<dbReference type="SMR" id="Q2TBX6"/>
<dbReference type="FunCoup" id="Q2TBX6">
    <property type="interactions" value="3137"/>
</dbReference>
<dbReference type="IntAct" id="Q2TBX6">
    <property type="interactions" value="1"/>
</dbReference>
<dbReference type="STRING" id="9913.ENSBTAP00000010108"/>
<dbReference type="MEROPS" id="T01.990"/>
<dbReference type="GlyCosmos" id="Q2TBX6">
    <property type="glycosylation" value="2 sites, No reported glycans"/>
</dbReference>
<dbReference type="GlyGen" id="Q2TBX6">
    <property type="glycosylation" value="2 sites"/>
</dbReference>
<dbReference type="PaxDb" id="9913-ENSBTAP00000010108"/>
<dbReference type="PeptideAtlas" id="Q2TBX6"/>
<dbReference type="GeneID" id="514237"/>
<dbReference type="KEGG" id="bta:514237"/>
<dbReference type="CTD" id="5689"/>
<dbReference type="eggNOG" id="KOG0179">
    <property type="taxonomic scope" value="Eukaryota"/>
</dbReference>
<dbReference type="InParanoid" id="Q2TBX6"/>
<dbReference type="OrthoDB" id="268479at2759"/>
<dbReference type="EvolutionaryTrace" id="Q2TBX6"/>
<dbReference type="Proteomes" id="UP000009136">
    <property type="component" value="Unplaced"/>
</dbReference>
<dbReference type="GO" id="GO:0005737">
    <property type="term" value="C:cytoplasm"/>
    <property type="evidence" value="ECO:0000318"/>
    <property type="project" value="GO_Central"/>
</dbReference>
<dbReference type="GO" id="GO:0005829">
    <property type="term" value="C:cytosol"/>
    <property type="evidence" value="ECO:0000304"/>
    <property type="project" value="Reactome"/>
</dbReference>
<dbReference type="GO" id="GO:0005634">
    <property type="term" value="C:nucleus"/>
    <property type="evidence" value="ECO:0000318"/>
    <property type="project" value="GO_Central"/>
</dbReference>
<dbReference type="GO" id="GO:0005839">
    <property type="term" value="C:proteasome core complex"/>
    <property type="evidence" value="ECO:0000250"/>
    <property type="project" value="UniProtKB"/>
</dbReference>
<dbReference type="GO" id="GO:0019774">
    <property type="term" value="C:proteasome core complex, beta-subunit complex"/>
    <property type="evidence" value="ECO:0000250"/>
    <property type="project" value="UniProtKB"/>
</dbReference>
<dbReference type="GO" id="GO:0051603">
    <property type="term" value="P:proteolysis involved in protein catabolic process"/>
    <property type="evidence" value="ECO:0000318"/>
    <property type="project" value="GO_Central"/>
</dbReference>
<dbReference type="CDD" id="cd03757">
    <property type="entry name" value="proteasome_beta_type_1"/>
    <property type="match status" value="1"/>
</dbReference>
<dbReference type="FunFam" id="3.60.20.10:FF:000033">
    <property type="entry name" value="Proteasome subunit beta"/>
    <property type="match status" value="1"/>
</dbReference>
<dbReference type="Gene3D" id="3.60.20.10">
    <property type="entry name" value="Glutamine Phosphoribosylpyrophosphate, subunit 1, domain 1"/>
    <property type="match status" value="1"/>
</dbReference>
<dbReference type="InterPro" id="IPR029055">
    <property type="entry name" value="Ntn_hydrolases_N"/>
</dbReference>
<dbReference type="InterPro" id="IPR016050">
    <property type="entry name" value="Proteasome_bsu_CS"/>
</dbReference>
<dbReference type="InterPro" id="IPR001353">
    <property type="entry name" value="Proteasome_sua/b"/>
</dbReference>
<dbReference type="InterPro" id="IPR023333">
    <property type="entry name" value="Proteasome_suB-type"/>
</dbReference>
<dbReference type="PANTHER" id="PTHR32194">
    <property type="entry name" value="METALLOPROTEASE TLDD"/>
    <property type="match status" value="1"/>
</dbReference>
<dbReference type="PANTHER" id="PTHR32194:SF2">
    <property type="entry name" value="PROTEASOME SUBUNIT BETA TYPE-1"/>
    <property type="match status" value="1"/>
</dbReference>
<dbReference type="Pfam" id="PF00227">
    <property type="entry name" value="Proteasome"/>
    <property type="match status" value="1"/>
</dbReference>
<dbReference type="SUPFAM" id="SSF56235">
    <property type="entry name" value="N-terminal nucleophile aminohydrolases (Ntn hydrolases)"/>
    <property type="match status" value="1"/>
</dbReference>
<dbReference type="PROSITE" id="PS00854">
    <property type="entry name" value="PROTEASOME_BETA_1"/>
    <property type="match status" value="1"/>
</dbReference>
<dbReference type="PROSITE" id="PS51476">
    <property type="entry name" value="PROTEASOME_BETA_2"/>
    <property type="match status" value="1"/>
</dbReference>